<protein>
    <recommendedName>
        <fullName>ATP synthase subunit a</fullName>
    </recommendedName>
    <alternativeName>
        <fullName>F-ATPase protein 6</fullName>
    </alternativeName>
</protein>
<organism>
    <name type="scientific">Vicia faba</name>
    <name type="common">Broad bean</name>
    <name type="synonym">Faba vulgaris</name>
    <dbReference type="NCBI Taxonomy" id="3906"/>
    <lineage>
        <taxon>Eukaryota</taxon>
        <taxon>Viridiplantae</taxon>
        <taxon>Streptophyta</taxon>
        <taxon>Embryophyta</taxon>
        <taxon>Tracheophyta</taxon>
        <taxon>Spermatophyta</taxon>
        <taxon>Magnoliopsida</taxon>
        <taxon>eudicotyledons</taxon>
        <taxon>Gunneridae</taxon>
        <taxon>Pentapetalae</taxon>
        <taxon>rosids</taxon>
        <taxon>fabids</taxon>
        <taxon>Fabales</taxon>
        <taxon>Fabaceae</taxon>
        <taxon>Papilionoideae</taxon>
        <taxon>50 kb inversion clade</taxon>
        <taxon>NPAAA clade</taxon>
        <taxon>Hologalegina</taxon>
        <taxon>IRL clade</taxon>
        <taxon>Fabeae</taxon>
        <taxon>Vicia</taxon>
    </lineage>
</organism>
<comment type="function">
    <text>Mitochondrial membrane ATP synthase (F(1)F(0) ATP synthase or Complex V) produces ATP from ADP in the presence of a proton gradient across the membrane which is generated by electron transport complexes of the respiratory chain. F-type ATPases consist of two structural domains, F(1) - containing the extramembraneous catalytic core and F(0) - containing the membrane proton channel, linked together by a central stalk and a peripheral stalk. During catalysis, ATP synthesis in the catalytic domain of F(1) is coupled via a rotary mechanism of the central stalk subunits to proton translocation. Key component of the proton channel; it may play a direct role in the translocation of protons across the membrane.</text>
</comment>
<comment type="subunit">
    <text>F-type ATPases have 2 components, CF(1) - the catalytic core - and CF(0) - the membrane proton channel. CF(1) has five subunits: alpha(3), beta(3), gamma(1), delta(1), epsilon(1). CF(0) has three main subunits: a, b and c.</text>
</comment>
<comment type="subcellular location">
    <subcellularLocation>
        <location>Mitochondrion inner membrane</location>
        <topology>Multi-pass membrane protein</topology>
    </subcellularLocation>
</comment>
<comment type="similarity">
    <text evidence="2">Belongs to the ATPase A chain family.</text>
</comment>
<geneLocation type="mitochondrion"/>
<gene>
    <name type="primary">ATP6</name>
</gene>
<evidence type="ECO:0000255" key="1"/>
<evidence type="ECO:0000305" key="2"/>
<dbReference type="EMBL" id="X54285">
    <property type="protein sequence ID" value="CAA38183.1"/>
    <property type="molecule type" value="Genomic_DNA"/>
</dbReference>
<dbReference type="PIR" id="A61027">
    <property type="entry name" value="A61027"/>
</dbReference>
<dbReference type="SMR" id="Q04654"/>
<dbReference type="GO" id="GO:0005743">
    <property type="term" value="C:mitochondrial inner membrane"/>
    <property type="evidence" value="ECO:0007669"/>
    <property type="project" value="UniProtKB-SubCell"/>
</dbReference>
<dbReference type="GO" id="GO:0045259">
    <property type="term" value="C:proton-transporting ATP synthase complex"/>
    <property type="evidence" value="ECO:0007669"/>
    <property type="project" value="UniProtKB-KW"/>
</dbReference>
<dbReference type="GO" id="GO:0046933">
    <property type="term" value="F:proton-transporting ATP synthase activity, rotational mechanism"/>
    <property type="evidence" value="ECO:0007669"/>
    <property type="project" value="TreeGrafter"/>
</dbReference>
<dbReference type="CDD" id="cd00310">
    <property type="entry name" value="ATP-synt_Fo_a_6"/>
    <property type="match status" value="1"/>
</dbReference>
<dbReference type="FunFam" id="1.20.120.220:FF:000003">
    <property type="entry name" value="ATP synthase subunit a"/>
    <property type="match status" value="1"/>
</dbReference>
<dbReference type="Gene3D" id="1.20.120.220">
    <property type="entry name" value="ATP synthase, F0 complex, subunit A"/>
    <property type="match status" value="1"/>
</dbReference>
<dbReference type="HAMAP" id="MF_01393">
    <property type="entry name" value="ATP_synth_a_bact"/>
    <property type="match status" value="1"/>
</dbReference>
<dbReference type="InterPro" id="IPR000568">
    <property type="entry name" value="ATP_synth_F0_asu"/>
</dbReference>
<dbReference type="InterPro" id="IPR023011">
    <property type="entry name" value="ATP_synth_F0_asu_AS"/>
</dbReference>
<dbReference type="InterPro" id="IPR045083">
    <property type="entry name" value="ATP_synth_F0_asu_bact/mt"/>
</dbReference>
<dbReference type="InterPro" id="IPR035908">
    <property type="entry name" value="F0_ATP_A_sf"/>
</dbReference>
<dbReference type="NCBIfam" id="TIGR01131">
    <property type="entry name" value="ATP_synt_6_or_A"/>
    <property type="match status" value="1"/>
</dbReference>
<dbReference type="NCBIfam" id="NF004482">
    <property type="entry name" value="PRK05815.2-4"/>
    <property type="match status" value="1"/>
</dbReference>
<dbReference type="PANTHER" id="PTHR11410">
    <property type="entry name" value="ATP SYNTHASE SUBUNIT A"/>
    <property type="match status" value="1"/>
</dbReference>
<dbReference type="PANTHER" id="PTHR11410:SF0">
    <property type="entry name" value="ATP SYNTHASE SUBUNIT A"/>
    <property type="match status" value="1"/>
</dbReference>
<dbReference type="Pfam" id="PF00119">
    <property type="entry name" value="ATP-synt_A"/>
    <property type="match status" value="1"/>
</dbReference>
<dbReference type="PRINTS" id="PR00123">
    <property type="entry name" value="ATPASEA"/>
</dbReference>
<dbReference type="SUPFAM" id="SSF81336">
    <property type="entry name" value="F1F0 ATP synthase subunit A"/>
    <property type="match status" value="1"/>
</dbReference>
<dbReference type="PROSITE" id="PS00449">
    <property type="entry name" value="ATPASE_A"/>
    <property type="match status" value="1"/>
</dbReference>
<reference key="1">
    <citation type="journal article" date="1990" name="Curr. Genet.">
        <title>A broad bean mitochondrial atp6 gene with an unusually simple, non-conserved 5' region.</title>
        <authorList>
            <person name="Macfarlane J.L."/>
            <person name="Wahleithner J.A."/>
            <person name="Wolstenholme D.R."/>
        </authorList>
    </citation>
    <scope>NUCLEOTIDE SEQUENCE [GENOMIC DNA]</scope>
</reference>
<keyword id="KW-0066">ATP synthesis</keyword>
<keyword id="KW-0138">CF(0)</keyword>
<keyword id="KW-0375">Hydrogen ion transport</keyword>
<keyword id="KW-0406">Ion transport</keyword>
<keyword id="KW-0472">Membrane</keyword>
<keyword id="KW-0496">Mitochondrion</keyword>
<keyword id="KW-0999">Mitochondrion inner membrane</keyword>
<keyword id="KW-0812">Transmembrane</keyword>
<keyword id="KW-1133">Transmembrane helix</keyword>
<keyword id="KW-0813">Transport</keyword>
<name>ATP6_VICFA</name>
<proteinExistence type="inferred from homology"/>
<feature type="chain" id="PRO_0000082183" description="ATP synthase subunit a">
    <location>
        <begin position="1"/>
        <end position="291"/>
    </location>
</feature>
<feature type="transmembrane region" description="Helical" evidence="1">
    <location>
        <begin position="51"/>
        <end position="71"/>
    </location>
</feature>
<feature type="transmembrane region" description="Helical" evidence="1">
    <location>
        <begin position="117"/>
        <end position="137"/>
    </location>
</feature>
<feature type="transmembrane region" description="Helical" evidence="1">
    <location>
        <begin position="146"/>
        <end position="166"/>
    </location>
</feature>
<feature type="transmembrane region" description="Helical" evidence="1">
    <location>
        <begin position="173"/>
        <end position="193"/>
    </location>
</feature>
<feature type="transmembrane region" description="Helical" evidence="1">
    <location>
        <begin position="213"/>
        <end position="233"/>
    </location>
</feature>
<feature type="transmembrane region" description="Helical" evidence="1">
    <location>
        <begin position="239"/>
        <end position="259"/>
    </location>
</feature>
<sequence length="291" mass="32544">MNLYLQLDLYLYNDNLYLYLYLESGVVPIPSPLEQFEIIPFLPMKIGDLYFSFTNPSLFMLLTLSLVLLLVHFVTKKGGGKSVPNAWQSLVELIYDFVPNLVNEQIGGLSGNVKQQFFPCIFVTFTFLLFCNLQGMIPYSFTVTSHFLITLGLSFSIFIGITIVGFQRNGLHFLSFLLPAGVPLPLAPFLVLLELISYCFRALSLGIRLFANMMAGHSLVKILSGFAWTMLCMNDLLYFIGDLGPLFIVLALTGPELGVAISQAHVSTISICIYLNDATNLHQTCLLFIYN</sequence>
<accession>Q04654</accession>